<reference key="1">
    <citation type="journal article" date="2000" name="Nature">
        <title>Sequence and analysis of chromosome 1 of the plant Arabidopsis thaliana.</title>
        <authorList>
            <person name="Theologis A."/>
            <person name="Ecker J.R."/>
            <person name="Palm C.J."/>
            <person name="Federspiel N.A."/>
            <person name="Kaul S."/>
            <person name="White O."/>
            <person name="Alonso J."/>
            <person name="Altafi H."/>
            <person name="Araujo R."/>
            <person name="Bowman C.L."/>
            <person name="Brooks S.Y."/>
            <person name="Buehler E."/>
            <person name="Chan A."/>
            <person name="Chao Q."/>
            <person name="Chen H."/>
            <person name="Cheuk R.F."/>
            <person name="Chin C.W."/>
            <person name="Chung M.K."/>
            <person name="Conn L."/>
            <person name="Conway A.B."/>
            <person name="Conway A.R."/>
            <person name="Creasy T.H."/>
            <person name="Dewar K."/>
            <person name="Dunn P."/>
            <person name="Etgu P."/>
            <person name="Feldblyum T.V."/>
            <person name="Feng J.-D."/>
            <person name="Fong B."/>
            <person name="Fujii C.Y."/>
            <person name="Gill J.E."/>
            <person name="Goldsmith A.D."/>
            <person name="Haas B."/>
            <person name="Hansen N.F."/>
            <person name="Hughes B."/>
            <person name="Huizar L."/>
            <person name="Hunter J.L."/>
            <person name="Jenkins J."/>
            <person name="Johnson-Hopson C."/>
            <person name="Khan S."/>
            <person name="Khaykin E."/>
            <person name="Kim C.J."/>
            <person name="Koo H.L."/>
            <person name="Kremenetskaia I."/>
            <person name="Kurtz D.B."/>
            <person name="Kwan A."/>
            <person name="Lam B."/>
            <person name="Langin-Hooper S."/>
            <person name="Lee A."/>
            <person name="Lee J.M."/>
            <person name="Lenz C.A."/>
            <person name="Li J.H."/>
            <person name="Li Y.-P."/>
            <person name="Lin X."/>
            <person name="Liu S.X."/>
            <person name="Liu Z.A."/>
            <person name="Luros J.S."/>
            <person name="Maiti R."/>
            <person name="Marziali A."/>
            <person name="Militscher J."/>
            <person name="Miranda M."/>
            <person name="Nguyen M."/>
            <person name="Nierman W.C."/>
            <person name="Osborne B.I."/>
            <person name="Pai G."/>
            <person name="Peterson J."/>
            <person name="Pham P.K."/>
            <person name="Rizzo M."/>
            <person name="Rooney T."/>
            <person name="Rowley D."/>
            <person name="Sakano H."/>
            <person name="Salzberg S.L."/>
            <person name="Schwartz J.R."/>
            <person name="Shinn P."/>
            <person name="Southwick A.M."/>
            <person name="Sun H."/>
            <person name="Tallon L.J."/>
            <person name="Tambunga G."/>
            <person name="Toriumi M.J."/>
            <person name="Town C.D."/>
            <person name="Utterback T."/>
            <person name="Van Aken S."/>
            <person name="Vaysberg M."/>
            <person name="Vysotskaia V.S."/>
            <person name="Walker M."/>
            <person name="Wu D."/>
            <person name="Yu G."/>
            <person name="Fraser C.M."/>
            <person name="Venter J.C."/>
            <person name="Davis R.W."/>
        </authorList>
    </citation>
    <scope>NUCLEOTIDE SEQUENCE [LARGE SCALE GENOMIC DNA]</scope>
    <source>
        <strain>cv. Columbia</strain>
    </source>
</reference>
<reference key="2">
    <citation type="journal article" date="2017" name="Plant J.">
        <title>Araport11: a complete reannotation of the Arabidopsis thaliana reference genome.</title>
        <authorList>
            <person name="Cheng C.Y."/>
            <person name="Krishnakumar V."/>
            <person name="Chan A.P."/>
            <person name="Thibaud-Nissen F."/>
            <person name="Schobel S."/>
            <person name="Town C.D."/>
        </authorList>
    </citation>
    <scope>GENOME REANNOTATION</scope>
    <source>
        <strain>cv. Columbia</strain>
    </source>
</reference>
<reference key="3">
    <citation type="submission" date="2005-03" db="EMBL/GenBank/DDBJ databases">
        <title>Large-scale analysis of RIKEN Arabidopsis full-length (RAFL) cDNAs.</title>
        <authorList>
            <person name="Totoki Y."/>
            <person name="Seki M."/>
            <person name="Ishida J."/>
            <person name="Nakajima M."/>
            <person name="Enju A."/>
            <person name="Kamiya A."/>
            <person name="Narusaka M."/>
            <person name="Shin-i T."/>
            <person name="Nakagawa M."/>
            <person name="Sakamoto N."/>
            <person name="Oishi K."/>
            <person name="Kohara Y."/>
            <person name="Kobayashi M."/>
            <person name="Toyoda A."/>
            <person name="Sakaki Y."/>
            <person name="Sakurai T."/>
            <person name="Iida K."/>
            <person name="Akiyama K."/>
            <person name="Satou M."/>
            <person name="Toyoda T."/>
            <person name="Konagaya A."/>
            <person name="Carninci P."/>
            <person name="Kawai J."/>
            <person name="Hayashizaki Y."/>
            <person name="Shinozaki K."/>
        </authorList>
    </citation>
    <scope>NUCLEOTIDE SEQUENCE [LARGE SCALE MRNA]</scope>
    <source>
        <strain>cv. Columbia</strain>
    </source>
</reference>
<reference key="4">
    <citation type="journal article" date="2000" name="J. Cell Sci.">
        <title>A myosin family tree.</title>
        <authorList>
            <person name="Hodge T."/>
            <person name="Cope M.J."/>
        </authorList>
    </citation>
    <scope>GENE FAMILY</scope>
</reference>
<reference key="5">
    <citation type="journal article" date="2001" name="Genome Biol.">
        <title>Analysis of the myosins encoded in the recently completed Arabidopsis thaliana genome sequence.</title>
        <authorList>
            <person name="Reddy A.S."/>
            <person name="Day I.S."/>
        </authorList>
    </citation>
    <scope>GENE FAMILY</scope>
</reference>
<reference key="6">
    <citation type="journal article" date="2011" name="Plant Physiol.">
        <title>Expression, splicing, and evolution of the myosin gene family in plants.</title>
        <authorList>
            <person name="Peremyslov V.V."/>
            <person name="Mockler T.C."/>
            <person name="Filichkin S.A."/>
            <person name="Fox S.E."/>
            <person name="Jaiswal P."/>
            <person name="Makarova K.S."/>
            <person name="Koonin E.V."/>
            <person name="Dolja V.V."/>
        </authorList>
    </citation>
    <scope>GENE FAMILY</scope>
    <scope>NOMENCLATURE</scope>
</reference>
<comment type="function">
    <text evidence="1">Myosin heavy chain that is required for the cell cycle-regulated transport of various organelles and proteins for their segregation. Functions by binding with its tail domain to receptor proteins on organelles and exerting force with its N-terminal motor domain against actin filaments, thereby transporting its cargo along polarized actin cables (By similarity).</text>
</comment>
<comment type="subunit">
    <text evidence="1">Homodimer.</text>
</comment>
<comment type="domain">
    <text evidence="1">IQ domain mediates interaction with calmodulin.</text>
</comment>
<comment type="similarity">
    <text evidence="7">Belongs to the TRAFAC class myosin-kinesin ATPase superfamily. Myosin family. Plant myosin class VIII subfamily.</text>
</comment>
<comment type="sequence caution" evidence="7">
    <conflict type="erroneous gene model prediction">
        <sequence resource="EMBL-CDS" id="AAD50052"/>
    </conflict>
</comment>
<name>MYO3_ARATH</name>
<feature type="chain" id="PRO_0000422859" description="Myosin-3">
    <location>
        <begin position="1"/>
        <end position="1153"/>
    </location>
</feature>
<feature type="domain" description="Myosin N-terminal SH3-like" evidence="5">
    <location>
        <begin position="104"/>
        <end position="153"/>
    </location>
</feature>
<feature type="domain" description="Myosin motor" evidence="4">
    <location>
        <begin position="157"/>
        <end position="829"/>
    </location>
</feature>
<feature type="domain" description="IQ 1" evidence="3">
    <location>
        <begin position="831"/>
        <end position="860"/>
    </location>
</feature>
<feature type="domain" description="IQ 2" evidence="3">
    <location>
        <begin position="854"/>
        <end position="883"/>
    </location>
</feature>
<feature type="domain" description="IQ 3" evidence="3">
    <location>
        <begin position="903"/>
        <end position="932"/>
    </location>
</feature>
<feature type="region of interest" description="Actin-binding" evidence="2">
    <location>
        <begin position="581"/>
        <end position="615"/>
    </location>
</feature>
<feature type="region of interest" description="Actin-binding" evidence="1">
    <location>
        <begin position="709"/>
        <end position="731"/>
    </location>
</feature>
<feature type="region of interest" description="Disordered" evidence="6">
    <location>
        <begin position="1020"/>
        <end position="1050"/>
    </location>
</feature>
<feature type="coiled-coil region" evidence="2">
    <location>
        <begin position="948"/>
        <end position="996"/>
    </location>
</feature>
<feature type="compositionally biased region" description="Polar residues" evidence="6">
    <location>
        <begin position="1024"/>
        <end position="1033"/>
    </location>
</feature>
<feature type="binding site" evidence="2">
    <location>
        <begin position="248"/>
        <end position="255"/>
    </location>
    <ligand>
        <name>ATP</name>
        <dbReference type="ChEBI" id="CHEBI:30616"/>
    </ligand>
</feature>
<feature type="binding site" evidence="2">
    <location>
        <begin position="296"/>
        <end position="304"/>
    </location>
    <ligand>
        <name>ATP</name>
        <dbReference type="ChEBI" id="CHEBI:30616"/>
    </ligand>
</feature>
<feature type="sequence conflict" description="In Ref. 3; BAD93813/BAD94158/BAD94177." evidence="7" ref="3">
    <original>T</original>
    <variation>S</variation>
    <location>
        <position position="423"/>
    </location>
</feature>
<sequence>MAHKVKASFQSLKTMPADYRFLGSPISDHLETNLITPPNGHLKNGVNGTASSVGGMDSVNEDSPYSVRSILNGERSSIGDGDSILPLPESNDRKWSDTNVYARKKVLQFWVQLPNGNWELGKIMSTSGEESVIVVTEGKVLKVKSETLVPANPDILDGVDDLMQLSYLNEPAVLYNLEYRYNQDMIYTKAGPVLVAVNPFKEVPLYGNRNIEAYRKRSNESPHVYAIADTAIREMIRDEVNQSIIISGESGAGKTETAKIAMQYLAALGGGSGIEYEILKTNPILEAFGNAKTLRNDNSSRFGKLIEIHFSETGKISGAQIQTFLLEKSRVVQCTEGERSYHIFYQLCAGASPTLREKLNLTSAKQYNYLKQSNCYSINGVDDAERFHAVKEALDIVHVSKEDQENVFAMLAAVLWLGNVSFTIIDNENHVEPEPDESLSTVAKLIGCNINELKLALSKRNMRVNNDTIVQKLTLSQAIDARDALAKSIYACLFDWLVEQINKSLAVGKRRTGRSISILDIYGFESFNKNSFEQFCINYANERLQQHFNRHLFKLEQEEYIQDGIDWTRVDFEDNQECLSLFEKKPLGLLSLLDEESTFPNGTDLTLANKLKQHLNDNSCFRGDRGKAFTVAHYAGEVTYETTGFLEKNRDLLHSDSIQLLSSCSCHLPQAFASSMLIYSEKPLVGPLHKAGGADSQRLSVATKFKGQLFQLMQRLGNTTPHFIRCIKPNNVQSAGLYEQGLVLQQLRCCGVLEVVRISRSGFPTRMFHHKFARRYGFLLLENIAAKDPLSVSVAILHQFNILPEMYQVGYTKLFFRTGQIGVLEDTRNRTLHGILRLQSYFRGHQARCRLKELKTGITILQSFVRGEKMRKEYTELLQRHRASAAIQSHVKRRIASQQYKATVDASAVIQSAIRGELVRRCAGDIGWLSSGGTKRNESDEVLVKASYLSDLQRRVLRTEAALREKEEENDILRQRVQQYDNRWSEYETKMKSMEEIWQKQMKSLQSSLSIAKKSLEVEDSARNSDASVNASDATDLDSGGSHYQMGHGRSRSVGVGLSVISRLAEEFGQRAQVFGDDRKFLMEVKSGQVEANLNPDRELRRLKQMFETWKKDYGGRLRETKLILSKLGSEETGGSAEKVKMNWWGRLRSTRY</sequence>
<protein>
    <recommendedName>
        <fullName>Myosin-3</fullName>
    </recommendedName>
    <alternativeName>
        <fullName>Myosin VIII A</fullName>
        <shortName>AtVIIIA</shortName>
    </alternativeName>
</protein>
<accession>F4I507</accession>
<accession>Q56ZX3</accession>
<accession>Q9SX51</accession>
<evidence type="ECO:0000250" key="1"/>
<evidence type="ECO:0000255" key="2"/>
<evidence type="ECO:0000255" key="3">
    <source>
        <dbReference type="PROSITE-ProRule" id="PRU00116"/>
    </source>
</evidence>
<evidence type="ECO:0000255" key="4">
    <source>
        <dbReference type="PROSITE-ProRule" id="PRU00782"/>
    </source>
</evidence>
<evidence type="ECO:0000255" key="5">
    <source>
        <dbReference type="PROSITE-ProRule" id="PRU01190"/>
    </source>
</evidence>
<evidence type="ECO:0000256" key="6">
    <source>
        <dbReference type="SAM" id="MobiDB-lite"/>
    </source>
</evidence>
<evidence type="ECO:0000305" key="7"/>
<gene>
    <name type="primary">VIII-A</name>
    <name type="synonym">VIIIA</name>
    <name type="ordered locus">At1g50360</name>
    <name type="ORF">F14I3.6</name>
</gene>
<dbReference type="EMBL" id="AC007980">
    <property type="protein sequence ID" value="AAD50052.1"/>
    <property type="status" value="ALT_SEQ"/>
    <property type="molecule type" value="Genomic_DNA"/>
</dbReference>
<dbReference type="EMBL" id="CP002684">
    <property type="protein sequence ID" value="AEE32540.1"/>
    <property type="molecule type" value="Genomic_DNA"/>
</dbReference>
<dbReference type="EMBL" id="AK220707">
    <property type="protein sequence ID" value="BAD93813.1"/>
    <property type="molecule type" value="mRNA"/>
</dbReference>
<dbReference type="EMBL" id="AK220837">
    <property type="protein sequence ID" value="BAD94158.1"/>
    <property type="molecule type" value="mRNA"/>
</dbReference>
<dbReference type="EMBL" id="AK220844">
    <property type="protein sequence ID" value="BAD94177.1"/>
    <property type="molecule type" value="mRNA"/>
</dbReference>
<dbReference type="PIR" id="G96539">
    <property type="entry name" value="G96539"/>
</dbReference>
<dbReference type="RefSeq" id="NP_175453.2">
    <property type="nucleotide sequence ID" value="NM_103919.5"/>
</dbReference>
<dbReference type="SMR" id="F4I507"/>
<dbReference type="FunCoup" id="F4I507">
    <property type="interactions" value="677"/>
</dbReference>
<dbReference type="STRING" id="3702.F4I507"/>
<dbReference type="GlyGen" id="F4I507">
    <property type="glycosylation" value="1 site"/>
</dbReference>
<dbReference type="iPTMnet" id="F4I507"/>
<dbReference type="PaxDb" id="3702-AT1G50360.1"/>
<dbReference type="ProteomicsDB" id="251275"/>
<dbReference type="EnsemblPlants" id="AT1G50360.1">
    <property type="protein sequence ID" value="AT1G50360.1"/>
    <property type="gene ID" value="AT1G50360"/>
</dbReference>
<dbReference type="GeneID" id="841458"/>
<dbReference type="Gramene" id="AT1G50360.1">
    <property type="protein sequence ID" value="AT1G50360.1"/>
    <property type="gene ID" value="AT1G50360"/>
</dbReference>
<dbReference type="KEGG" id="ath:AT1G50360"/>
<dbReference type="Araport" id="AT1G50360"/>
<dbReference type="TAIR" id="AT1G50360">
    <property type="gene designation" value="VIIIA"/>
</dbReference>
<dbReference type="eggNOG" id="KOG0160">
    <property type="taxonomic scope" value="Eukaryota"/>
</dbReference>
<dbReference type="HOGENOM" id="CLU_000192_7_2_1"/>
<dbReference type="InParanoid" id="F4I507"/>
<dbReference type="OMA" id="KYQTFCT"/>
<dbReference type="PRO" id="PR:F4I507"/>
<dbReference type="Proteomes" id="UP000006548">
    <property type="component" value="Chromosome 1"/>
</dbReference>
<dbReference type="ExpressionAtlas" id="F4I507">
    <property type="expression patterns" value="baseline and differential"/>
</dbReference>
<dbReference type="GO" id="GO:0005829">
    <property type="term" value="C:cytosol"/>
    <property type="evidence" value="ECO:0007005"/>
    <property type="project" value="TAIR"/>
</dbReference>
<dbReference type="GO" id="GO:0016459">
    <property type="term" value="C:myosin complex"/>
    <property type="evidence" value="ECO:0007669"/>
    <property type="project" value="UniProtKB-KW"/>
</dbReference>
<dbReference type="GO" id="GO:0009506">
    <property type="term" value="C:plasmodesma"/>
    <property type="evidence" value="ECO:0007005"/>
    <property type="project" value="TAIR"/>
</dbReference>
<dbReference type="GO" id="GO:0003779">
    <property type="term" value="F:actin binding"/>
    <property type="evidence" value="ECO:0007669"/>
    <property type="project" value="UniProtKB-KW"/>
</dbReference>
<dbReference type="GO" id="GO:0005524">
    <property type="term" value="F:ATP binding"/>
    <property type="evidence" value="ECO:0007669"/>
    <property type="project" value="UniProtKB-KW"/>
</dbReference>
<dbReference type="GO" id="GO:0005516">
    <property type="term" value="F:calmodulin binding"/>
    <property type="evidence" value="ECO:0007669"/>
    <property type="project" value="UniProtKB-KW"/>
</dbReference>
<dbReference type="GO" id="GO:0003774">
    <property type="term" value="F:cytoskeletal motor activity"/>
    <property type="evidence" value="ECO:0000250"/>
    <property type="project" value="TAIR"/>
</dbReference>
<dbReference type="GO" id="GO:0030048">
    <property type="term" value="P:actin filament-based movement"/>
    <property type="evidence" value="ECO:0000304"/>
    <property type="project" value="TAIR"/>
</dbReference>
<dbReference type="CDD" id="cd01383">
    <property type="entry name" value="MYSc_Myo8"/>
    <property type="match status" value="1"/>
</dbReference>
<dbReference type="FunFam" id="1.20.5.190:FF:000064">
    <property type="entry name" value="Myosin 2"/>
    <property type="match status" value="1"/>
</dbReference>
<dbReference type="FunFam" id="1.10.10.820:FF:000001">
    <property type="entry name" value="Myosin heavy chain"/>
    <property type="match status" value="1"/>
</dbReference>
<dbReference type="FunFam" id="1.20.58.530:FF:000013">
    <property type="entry name" value="Unconventional myosin-XIX"/>
    <property type="match status" value="1"/>
</dbReference>
<dbReference type="Gene3D" id="1.10.10.820">
    <property type="match status" value="1"/>
</dbReference>
<dbReference type="Gene3D" id="1.20.5.190">
    <property type="match status" value="1"/>
</dbReference>
<dbReference type="Gene3D" id="1.20.58.530">
    <property type="match status" value="1"/>
</dbReference>
<dbReference type="Gene3D" id="6.20.240.20">
    <property type="match status" value="1"/>
</dbReference>
<dbReference type="Gene3D" id="3.40.850.10">
    <property type="entry name" value="Kinesin motor domain"/>
    <property type="match status" value="1"/>
</dbReference>
<dbReference type="Gene3D" id="1.20.120.720">
    <property type="entry name" value="Myosin VI head, motor domain, U50 subdomain"/>
    <property type="match status" value="1"/>
</dbReference>
<dbReference type="InterPro" id="IPR000048">
    <property type="entry name" value="IQ_motif_EF-hand-BS"/>
</dbReference>
<dbReference type="InterPro" id="IPR036961">
    <property type="entry name" value="Kinesin_motor_dom_sf"/>
</dbReference>
<dbReference type="InterPro" id="IPR001609">
    <property type="entry name" value="Myosin_head_motor_dom-like"/>
</dbReference>
<dbReference type="InterPro" id="IPR004009">
    <property type="entry name" value="Myosin_N"/>
</dbReference>
<dbReference type="InterPro" id="IPR036022">
    <property type="entry name" value="MYSc_Myo8"/>
</dbReference>
<dbReference type="InterPro" id="IPR027417">
    <property type="entry name" value="P-loop_NTPase"/>
</dbReference>
<dbReference type="PANTHER" id="PTHR13140">
    <property type="entry name" value="MYOSIN"/>
    <property type="match status" value="1"/>
</dbReference>
<dbReference type="PANTHER" id="PTHR13140:SF849">
    <property type="entry name" value="MYOSIN-3"/>
    <property type="match status" value="1"/>
</dbReference>
<dbReference type="Pfam" id="PF00612">
    <property type="entry name" value="IQ"/>
    <property type="match status" value="3"/>
</dbReference>
<dbReference type="Pfam" id="PF00063">
    <property type="entry name" value="Myosin_head"/>
    <property type="match status" value="1"/>
</dbReference>
<dbReference type="Pfam" id="PF25369">
    <property type="entry name" value="SH3_VIII-1_N"/>
    <property type="match status" value="1"/>
</dbReference>
<dbReference type="PRINTS" id="PR00193">
    <property type="entry name" value="MYOSINHEAVY"/>
</dbReference>
<dbReference type="SMART" id="SM00015">
    <property type="entry name" value="IQ"/>
    <property type="match status" value="4"/>
</dbReference>
<dbReference type="SMART" id="SM00242">
    <property type="entry name" value="MYSc"/>
    <property type="match status" value="1"/>
</dbReference>
<dbReference type="SUPFAM" id="SSF52540">
    <property type="entry name" value="P-loop containing nucleoside triphosphate hydrolases"/>
    <property type="match status" value="1"/>
</dbReference>
<dbReference type="PROSITE" id="PS50096">
    <property type="entry name" value="IQ"/>
    <property type="match status" value="2"/>
</dbReference>
<dbReference type="PROSITE" id="PS51456">
    <property type="entry name" value="MYOSIN_MOTOR"/>
    <property type="match status" value="1"/>
</dbReference>
<dbReference type="PROSITE" id="PS51844">
    <property type="entry name" value="SH3_LIKE"/>
    <property type="match status" value="1"/>
</dbReference>
<organism>
    <name type="scientific">Arabidopsis thaliana</name>
    <name type="common">Mouse-ear cress</name>
    <dbReference type="NCBI Taxonomy" id="3702"/>
    <lineage>
        <taxon>Eukaryota</taxon>
        <taxon>Viridiplantae</taxon>
        <taxon>Streptophyta</taxon>
        <taxon>Embryophyta</taxon>
        <taxon>Tracheophyta</taxon>
        <taxon>Spermatophyta</taxon>
        <taxon>Magnoliopsida</taxon>
        <taxon>eudicotyledons</taxon>
        <taxon>Gunneridae</taxon>
        <taxon>Pentapetalae</taxon>
        <taxon>rosids</taxon>
        <taxon>malvids</taxon>
        <taxon>Brassicales</taxon>
        <taxon>Brassicaceae</taxon>
        <taxon>Camelineae</taxon>
        <taxon>Arabidopsis</taxon>
    </lineage>
</organism>
<keyword id="KW-0009">Actin-binding</keyword>
<keyword id="KW-0067">ATP-binding</keyword>
<keyword id="KW-0112">Calmodulin-binding</keyword>
<keyword id="KW-0175">Coiled coil</keyword>
<keyword id="KW-0505">Motor protein</keyword>
<keyword id="KW-0518">Myosin</keyword>
<keyword id="KW-0547">Nucleotide-binding</keyword>
<keyword id="KW-1185">Reference proteome</keyword>
<keyword id="KW-0677">Repeat</keyword>
<proteinExistence type="evidence at transcript level"/>